<evidence type="ECO:0000255" key="1">
    <source>
        <dbReference type="PROSITE-ProRule" id="PRU00253"/>
    </source>
</evidence>
<evidence type="ECO:0000269" key="2">
    <source>
    </source>
</evidence>
<evidence type="ECO:0000305" key="3"/>
<evidence type="ECO:0000312" key="4">
    <source>
        <dbReference type="EMBL" id="AAY49850.1"/>
    </source>
</evidence>
<feature type="chain" id="PRO_0000462344" description="HTH-type transcriptional regulator XC_2801">
    <location>
        <begin position="1"/>
        <end position="344"/>
    </location>
</feature>
<feature type="domain" description="HTH lysR-type" evidence="1">
    <location>
        <begin position="3"/>
        <end position="60"/>
    </location>
</feature>
<feature type="DNA-binding region" description="H-T-H motif" evidence="1">
    <location>
        <begin position="20"/>
        <end position="39"/>
    </location>
</feature>
<gene>
    <name evidence="4" type="ordered locus">XC_2801</name>
</gene>
<reference evidence="4" key="1">
    <citation type="journal article" date="2005" name="Genome Res.">
        <title>Comparative and functional genomic analyses of the pathogenicity of phytopathogen Xanthomonas campestris pv. campestris.</title>
        <authorList>
            <person name="Qian W."/>
            <person name="Jia Y."/>
            <person name="Ren S.-X."/>
            <person name="He Y.-Q."/>
            <person name="Feng J.-X."/>
            <person name="Lu L.-F."/>
            <person name="Sun Q."/>
            <person name="Ying G."/>
            <person name="Tang D.-J."/>
            <person name="Tang H."/>
            <person name="Wu W."/>
            <person name="Hao P."/>
            <person name="Wang L."/>
            <person name="Jiang B.-L."/>
            <person name="Zeng S."/>
            <person name="Gu W.-Y."/>
            <person name="Lu G."/>
            <person name="Rong L."/>
            <person name="Tian Y."/>
            <person name="Yao Z."/>
            <person name="Fu G."/>
            <person name="Chen B."/>
            <person name="Fang R."/>
            <person name="Qiang B."/>
            <person name="Chen Z."/>
            <person name="Zhao G.-P."/>
            <person name="Tang J.-L."/>
            <person name="He C."/>
        </authorList>
    </citation>
    <scope>NUCLEOTIDE SEQUENCE [LARGE SCALE GENOMIC DNA]</scope>
    <source>
        <strain>8004</strain>
    </source>
</reference>
<reference key="2">
    <citation type="journal article" date="2014" name="PLoS Pathog.">
        <title>Novel cyclic di-GMP effectors of the YajQ protein family control bacterial virulence.</title>
        <authorList>
            <person name="An S.Q."/>
            <person name="Caly D.L."/>
            <person name="McCarthy Y."/>
            <person name="Murdoch S.L."/>
            <person name="Ward J."/>
            <person name="Febrer M."/>
            <person name="Dow J.M."/>
            <person name="Ryan R.P."/>
        </authorList>
    </citation>
    <scope>FUNCTION</scope>
    <scope>ACTIVITY REGULATION</scope>
    <scope>INTERACTION WITH XC_3703</scope>
    <scope>DISRUPTION PHENOTYPE</scope>
    <source>
        <strain>8004</strain>
    </source>
</reference>
<sequence length="344" mass="37977">MTHDLNDTLIFVKVVEQGSFIAAANSLGLPKTTVSRKVQELETRLGARLLHRTTRRIGLTEAGAVYHEHCQRIARELEEAESAVGQLQSGPRGWLRFTVPYSLGITWIAPLLGEFHAQYPEIQLDMHLGNEKLDLIGGEADLALRVGALPDSNLVARKLGSLRTQVFASPSYIERYGEPLHPDELQFHRTLALRKNRNVHNNRFFWSLSDGSDVREFPVNPLMVANDPAALNGAVLCGEGLLLTGDVMAKPFVQSGMVRRVLAGWTGPEVDFNAVFAGGRLVSPKVRAFVDFLVTRLNFDADYMMAQCPARLAAQRANGDAEVEVEVEAELRAEGKRILEKATA</sequence>
<accession>A0A0H2XAU1</accession>
<proteinExistence type="evidence at protein level"/>
<dbReference type="EMBL" id="CP000050">
    <property type="protein sequence ID" value="AAY49850.1"/>
    <property type="molecule type" value="Genomic_DNA"/>
</dbReference>
<dbReference type="RefSeq" id="WP_011036627.1">
    <property type="nucleotide sequence ID" value="NZ_CP155948.1"/>
</dbReference>
<dbReference type="SMR" id="A0A0H2XAU1"/>
<dbReference type="KEGG" id="xcb:XC_2801"/>
<dbReference type="HOGENOM" id="CLU_039613_16_2_6"/>
<dbReference type="Proteomes" id="UP000000420">
    <property type="component" value="Chromosome"/>
</dbReference>
<dbReference type="GO" id="GO:0003700">
    <property type="term" value="F:DNA-binding transcription factor activity"/>
    <property type="evidence" value="ECO:0007669"/>
    <property type="project" value="InterPro"/>
</dbReference>
<dbReference type="GO" id="GO:0043565">
    <property type="term" value="F:sequence-specific DNA binding"/>
    <property type="evidence" value="ECO:0007669"/>
    <property type="project" value="TreeGrafter"/>
</dbReference>
<dbReference type="GO" id="GO:0006351">
    <property type="term" value="P:DNA-templated transcription"/>
    <property type="evidence" value="ECO:0007669"/>
    <property type="project" value="TreeGrafter"/>
</dbReference>
<dbReference type="CDD" id="cd08422">
    <property type="entry name" value="PBP2_CrgA_like"/>
    <property type="match status" value="1"/>
</dbReference>
<dbReference type="FunFam" id="1.10.10.10:FF:000001">
    <property type="entry name" value="LysR family transcriptional regulator"/>
    <property type="match status" value="1"/>
</dbReference>
<dbReference type="Gene3D" id="3.40.190.290">
    <property type="match status" value="1"/>
</dbReference>
<dbReference type="Gene3D" id="1.10.10.10">
    <property type="entry name" value="Winged helix-like DNA-binding domain superfamily/Winged helix DNA-binding domain"/>
    <property type="match status" value="1"/>
</dbReference>
<dbReference type="InterPro" id="IPR005119">
    <property type="entry name" value="LysR_subst-bd"/>
</dbReference>
<dbReference type="InterPro" id="IPR000847">
    <property type="entry name" value="Tscrpt_reg_HTH_LysR"/>
</dbReference>
<dbReference type="InterPro" id="IPR036388">
    <property type="entry name" value="WH-like_DNA-bd_sf"/>
</dbReference>
<dbReference type="InterPro" id="IPR036390">
    <property type="entry name" value="WH_DNA-bd_sf"/>
</dbReference>
<dbReference type="PANTHER" id="PTHR30537">
    <property type="entry name" value="HTH-TYPE TRANSCRIPTIONAL REGULATOR"/>
    <property type="match status" value="1"/>
</dbReference>
<dbReference type="PANTHER" id="PTHR30537:SF68">
    <property type="entry name" value="TRANSCRIPTIONAL REGULATOR-RELATED"/>
    <property type="match status" value="1"/>
</dbReference>
<dbReference type="Pfam" id="PF00126">
    <property type="entry name" value="HTH_1"/>
    <property type="match status" value="1"/>
</dbReference>
<dbReference type="Pfam" id="PF03466">
    <property type="entry name" value="LysR_substrate"/>
    <property type="match status" value="1"/>
</dbReference>
<dbReference type="SUPFAM" id="SSF53850">
    <property type="entry name" value="Periplasmic binding protein-like II"/>
    <property type="match status" value="1"/>
</dbReference>
<dbReference type="SUPFAM" id="SSF46785">
    <property type="entry name" value="Winged helix' DNA-binding domain"/>
    <property type="match status" value="1"/>
</dbReference>
<dbReference type="PROSITE" id="PS50931">
    <property type="entry name" value="HTH_LYSR"/>
    <property type="match status" value="1"/>
</dbReference>
<protein>
    <recommendedName>
        <fullName evidence="3">HTH-type transcriptional regulator XC_2801</fullName>
    </recommendedName>
</protein>
<keyword id="KW-0238">DNA-binding</keyword>
<keyword id="KW-0804">Transcription</keyword>
<keyword id="KW-0805">Transcription regulation</keyword>
<keyword id="KW-0843">Virulence</keyword>
<comment type="function">
    <text evidence="2">Transcriptional regulator that directly or indirectly regulates the expression of virulence-related genes, including flhB, aaeA, fliL and flgG (PubMed:25329577). Binds to the promoter of the target genes only in the presence of XC_3703 (PubMed:25329577).</text>
</comment>
<comment type="activity regulation">
    <text evidence="2">Activity is regulated by cyclic di-GMP (PubMed:25329577). Cyclic di-GMP specifically binds to XC_3703, which inhibits the interaction of the XC_2801-XC_3703 complex with DNA and prevents the transcription of the target genes (PubMed:25329577).</text>
</comment>
<comment type="subunit">
    <text evidence="2">Interacts with the cyclic di-GMP effector XC_3703.</text>
</comment>
<comment type="disruption phenotype">
    <text evidence="2">Disruption of the gene alters the expression of about forty genes associated with diverse functions, including extracellular enzyme production, attachment, biofilm formation and flagellar biosynthesis (PubMed:25329577). The mutant shows reduced virulence, but the effect is less pronounced than that of XC_3703 mutation (PubMed:25329577).</text>
</comment>
<comment type="similarity">
    <text evidence="3">Belongs to the LysR transcriptional regulatory family.</text>
</comment>
<name>R2801_XANC8</name>
<organism>
    <name type="scientific">Xanthomonas campestris pv. campestris (strain 8004)</name>
    <dbReference type="NCBI Taxonomy" id="314565"/>
    <lineage>
        <taxon>Bacteria</taxon>
        <taxon>Pseudomonadati</taxon>
        <taxon>Pseudomonadota</taxon>
        <taxon>Gammaproteobacteria</taxon>
        <taxon>Lysobacterales</taxon>
        <taxon>Lysobacteraceae</taxon>
        <taxon>Xanthomonas</taxon>
    </lineage>
</organism>